<evidence type="ECO:0000250" key="1"/>
<evidence type="ECO:0000255" key="2">
    <source>
        <dbReference type="PROSITE-ProRule" id="PRU00840"/>
    </source>
</evidence>
<evidence type="ECO:0000256" key="3">
    <source>
        <dbReference type="SAM" id="MobiDB-lite"/>
    </source>
</evidence>
<comment type="function">
    <text evidence="1">Specifically binds to the upstream regulatory region of type I IFN and IFN-inducible MHC class I genes (the interferon consensus sequence (ICS)) and represses those genes. Also acts as an activator for several genes including H4 and IL7. Constitutively binds to the ISRE promoter to activate IL7. Involved in cell cycle regulation through binding the site II (HiNF-M) promoter region of H4 and activating transcription during cell growth. Antagonizes IRF1 transcriptional activation (By similarity).</text>
</comment>
<comment type="subunit">
    <text evidence="1">Interacts with CREBBP in growing cells; the interaction acetylates IRF2 and regulates IRF2-dependent H4 promoter activity.</text>
</comment>
<comment type="subcellular location">
    <subcellularLocation>
        <location>Nucleus</location>
    </subcellularLocation>
</comment>
<comment type="similarity">
    <text evidence="2">Belongs to the IRF family.</text>
</comment>
<proteinExistence type="evidence at transcript level"/>
<organism>
    <name type="scientific">Gallus gallus</name>
    <name type="common">Chicken</name>
    <dbReference type="NCBI Taxonomy" id="9031"/>
    <lineage>
        <taxon>Eukaryota</taxon>
        <taxon>Metazoa</taxon>
        <taxon>Chordata</taxon>
        <taxon>Craniata</taxon>
        <taxon>Vertebrata</taxon>
        <taxon>Euteleostomi</taxon>
        <taxon>Archelosauria</taxon>
        <taxon>Archosauria</taxon>
        <taxon>Dinosauria</taxon>
        <taxon>Saurischia</taxon>
        <taxon>Theropoda</taxon>
        <taxon>Coelurosauria</taxon>
        <taxon>Aves</taxon>
        <taxon>Neognathae</taxon>
        <taxon>Galloanserae</taxon>
        <taxon>Galliformes</taxon>
        <taxon>Phasianidae</taxon>
        <taxon>Phasianinae</taxon>
        <taxon>Gallus</taxon>
    </lineage>
</organism>
<name>IRF2_CHICK</name>
<protein>
    <recommendedName>
        <fullName>Interferon regulatory factor 2</fullName>
        <shortName>IRF-2</shortName>
    </recommendedName>
</protein>
<gene>
    <name type="primary">IRF2</name>
</gene>
<accession>Q98925</accession>
<reference key="1">
    <citation type="journal article" date="1997" name="J. Interferon Cytokine Res.">
        <title>Cloning of chicken interferon regulatory factor-2 (IRF-2) cDNA: expression and mapping of the IRF-2 gene.</title>
        <authorList>
            <person name="Marienfeld R."/>
            <person name="Nanda I."/>
            <person name="Zoeller B."/>
            <person name="Schmid M."/>
            <person name="Rebbert M."/>
            <person name="Jungwirth C."/>
        </authorList>
    </citation>
    <scope>NUCLEOTIDE SEQUENCE [MRNA]</scope>
    <source>
        <tissue>Embryo</tissue>
    </source>
</reference>
<keyword id="KW-0007">Acetylation</keyword>
<keyword id="KW-0010">Activator</keyword>
<keyword id="KW-0238">DNA-binding</keyword>
<keyword id="KW-1017">Isopeptide bond</keyword>
<keyword id="KW-0539">Nucleus</keyword>
<keyword id="KW-1185">Reference proteome</keyword>
<keyword id="KW-0678">Repressor</keyword>
<keyword id="KW-0804">Transcription</keyword>
<keyword id="KW-0805">Transcription regulation</keyword>
<keyword id="KW-0832">Ubl conjugation</keyword>
<dbReference type="EMBL" id="X95478">
    <property type="protein sequence ID" value="CAA64748.1"/>
    <property type="molecule type" value="mRNA"/>
</dbReference>
<dbReference type="RefSeq" id="NP_990527.1">
    <property type="nucleotide sequence ID" value="NM_205196.1"/>
</dbReference>
<dbReference type="RefSeq" id="XP_015131640.1">
    <property type="nucleotide sequence ID" value="XM_015276154.4"/>
</dbReference>
<dbReference type="RefSeq" id="XP_015131641.1">
    <property type="nucleotide sequence ID" value="XM_015276155.4"/>
</dbReference>
<dbReference type="RefSeq" id="XP_015131642.1">
    <property type="nucleotide sequence ID" value="XM_015276156.4"/>
</dbReference>
<dbReference type="RefSeq" id="XP_015131643.1">
    <property type="nucleotide sequence ID" value="XM_015276157.1"/>
</dbReference>
<dbReference type="RefSeq" id="XP_015131644.1">
    <property type="nucleotide sequence ID" value="XM_015276158.1"/>
</dbReference>
<dbReference type="RefSeq" id="XP_040554678.1">
    <property type="nucleotide sequence ID" value="XM_040698744.2"/>
</dbReference>
<dbReference type="RefSeq" id="XP_046771524.1">
    <property type="nucleotide sequence ID" value="XM_046915568.1"/>
</dbReference>
<dbReference type="RefSeq" id="XP_046771525.1">
    <property type="nucleotide sequence ID" value="XM_046915569.1"/>
</dbReference>
<dbReference type="RefSeq" id="XP_046771526.1">
    <property type="nucleotide sequence ID" value="XM_046915570.1"/>
</dbReference>
<dbReference type="RefSeq" id="XP_046771527.1">
    <property type="nucleotide sequence ID" value="XM_046915571.1"/>
</dbReference>
<dbReference type="RefSeq" id="XP_046771528.1">
    <property type="nucleotide sequence ID" value="XM_046915572.1"/>
</dbReference>
<dbReference type="RefSeq" id="XP_046771529.1">
    <property type="nucleotide sequence ID" value="XM_046915573.1"/>
</dbReference>
<dbReference type="RefSeq" id="XP_046771530.1">
    <property type="nucleotide sequence ID" value="XM_046915574.1"/>
</dbReference>
<dbReference type="RefSeq" id="XP_046795884.1">
    <property type="nucleotide sequence ID" value="XM_046939928.1"/>
</dbReference>
<dbReference type="RefSeq" id="XP_046795885.1">
    <property type="nucleotide sequence ID" value="XM_046939929.1"/>
</dbReference>
<dbReference type="RefSeq" id="XP_046795886.1">
    <property type="nucleotide sequence ID" value="XM_046939930.1"/>
</dbReference>
<dbReference type="SMR" id="Q98925"/>
<dbReference type="FunCoup" id="Q98925">
    <property type="interactions" value="629"/>
</dbReference>
<dbReference type="STRING" id="9031.ENSGALP00000055620"/>
<dbReference type="PaxDb" id="9031-ENSGALP00000037458"/>
<dbReference type="Ensembl" id="ENSGALT00010016981.1">
    <property type="protein sequence ID" value="ENSGALP00010009503.1"/>
    <property type="gene ID" value="ENSGALG00010007130.1"/>
</dbReference>
<dbReference type="GeneID" id="396115"/>
<dbReference type="KEGG" id="gga:396115"/>
<dbReference type="CTD" id="3660"/>
<dbReference type="VEuPathDB" id="HostDB:geneid_396115"/>
<dbReference type="eggNOG" id="ENOG502QW7C">
    <property type="taxonomic scope" value="Eukaryota"/>
</dbReference>
<dbReference type="GeneTree" id="ENSGT00940000159063"/>
<dbReference type="HOGENOM" id="CLU_056386_0_0_1"/>
<dbReference type="InParanoid" id="Q98925"/>
<dbReference type="OrthoDB" id="6538197at2759"/>
<dbReference type="PhylomeDB" id="Q98925"/>
<dbReference type="PRO" id="PR:Q98925"/>
<dbReference type="Proteomes" id="UP000000539">
    <property type="component" value="Chromosome 4"/>
</dbReference>
<dbReference type="Bgee" id="ENSGALG00000010642">
    <property type="expression patterns" value="Expressed in lung and 13 other cell types or tissues"/>
</dbReference>
<dbReference type="GO" id="GO:0005634">
    <property type="term" value="C:nucleus"/>
    <property type="evidence" value="ECO:0000318"/>
    <property type="project" value="GO_Central"/>
</dbReference>
<dbReference type="GO" id="GO:0000981">
    <property type="term" value="F:DNA-binding transcription factor activity, RNA polymerase II-specific"/>
    <property type="evidence" value="ECO:0000318"/>
    <property type="project" value="GO_Central"/>
</dbReference>
<dbReference type="GO" id="GO:0000978">
    <property type="term" value="F:RNA polymerase II cis-regulatory region sequence-specific DNA binding"/>
    <property type="evidence" value="ECO:0000318"/>
    <property type="project" value="GO_Central"/>
</dbReference>
<dbReference type="GO" id="GO:0002376">
    <property type="term" value="P:immune system process"/>
    <property type="evidence" value="ECO:0000318"/>
    <property type="project" value="GO_Central"/>
</dbReference>
<dbReference type="GO" id="GO:0006357">
    <property type="term" value="P:regulation of transcription by RNA polymerase II"/>
    <property type="evidence" value="ECO:0000318"/>
    <property type="project" value="GO_Central"/>
</dbReference>
<dbReference type="CDD" id="cd00103">
    <property type="entry name" value="IRF"/>
    <property type="match status" value="1"/>
</dbReference>
<dbReference type="FunFam" id="1.10.10.10:FF:000065">
    <property type="entry name" value="Interferon regulatory factor"/>
    <property type="match status" value="1"/>
</dbReference>
<dbReference type="Gene3D" id="1.10.10.10">
    <property type="entry name" value="Winged helix-like DNA-binding domain superfamily/Winged helix DNA-binding domain"/>
    <property type="match status" value="1"/>
</dbReference>
<dbReference type="InterPro" id="IPR019817">
    <property type="entry name" value="Interferon_reg_fac_CS"/>
</dbReference>
<dbReference type="InterPro" id="IPR001346">
    <property type="entry name" value="Interferon_reg_fact_DNA-bd_dom"/>
</dbReference>
<dbReference type="InterPro" id="IPR017431">
    <property type="entry name" value="IRF1/IRF2"/>
</dbReference>
<dbReference type="InterPro" id="IPR036388">
    <property type="entry name" value="WH-like_DNA-bd_sf"/>
</dbReference>
<dbReference type="InterPro" id="IPR036390">
    <property type="entry name" value="WH_DNA-bd_sf"/>
</dbReference>
<dbReference type="PANTHER" id="PTHR11949">
    <property type="entry name" value="INTERFERON REGULATORY FACTOR"/>
    <property type="match status" value="1"/>
</dbReference>
<dbReference type="PANTHER" id="PTHR11949:SF22">
    <property type="entry name" value="INTERFERON REGULATORY FACTOR 2"/>
    <property type="match status" value="1"/>
</dbReference>
<dbReference type="Pfam" id="PF00605">
    <property type="entry name" value="IRF"/>
    <property type="match status" value="1"/>
</dbReference>
<dbReference type="PIRSF" id="PIRSF038196">
    <property type="entry name" value="IFN_RF1/2"/>
    <property type="match status" value="1"/>
</dbReference>
<dbReference type="PRINTS" id="PR00267">
    <property type="entry name" value="INTFRNREGFCT"/>
</dbReference>
<dbReference type="SMART" id="SM00348">
    <property type="entry name" value="IRF"/>
    <property type="match status" value="1"/>
</dbReference>
<dbReference type="SUPFAM" id="SSF46785">
    <property type="entry name" value="Winged helix' DNA-binding domain"/>
    <property type="match status" value="1"/>
</dbReference>
<dbReference type="PROSITE" id="PS00601">
    <property type="entry name" value="IRF_1"/>
    <property type="match status" value="1"/>
</dbReference>
<dbReference type="PROSITE" id="PS51507">
    <property type="entry name" value="IRF_2"/>
    <property type="match status" value="1"/>
</dbReference>
<sequence>MPVERMRMRPWLEEQINSNTIPGLKWINKEKKIFQIPWMHAARHGWDVEKDAPLFRNWAIHTGKYQSGVDKPDPKTWKANFRCAMNSLPDIEEVKDKSIKKGNNAFRVYRMLPLSERPSKKGKKTKSEKDDKFKQIKQEPVESSFGINGLNDVTSDYFLSSSIKNEVDSTVNIVVVGQPHLDGSSEEQVIVANPPDVCQVVEVTTESDEQPLSMSQLYPLQISPVSSYAESETTDSVPSDEENAEGRLHWQKKNIEGKQYLSNLGMRNTSHMLPSMATFVANKPDLQVTIKEESCPLPYNSSWPPFPDIPLPQVVSTASTSSSRPDRETRASVIKKTSDITQSRVKSC</sequence>
<feature type="chain" id="PRO_0000154552" description="Interferon regulatory factor 2">
    <location>
        <begin position="1"/>
        <end position="348"/>
    </location>
</feature>
<feature type="DNA-binding region" description="IRF tryptophan pentad repeat" evidence="2">
    <location>
        <begin position="5"/>
        <end position="113"/>
    </location>
</feature>
<feature type="region of interest" description="Disordered" evidence="3">
    <location>
        <begin position="117"/>
        <end position="137"/>
    </location>
</feature>
<feature type="region of interest" description="Disordered" evidence="3">
    <location>
        <begin position="311"/>
        <end position="348"/>
    </location>
</feature>
<feature type="compositionally biased region" description="Basic and acidic residues" evidence="3">
    <location>
        <begin position="125"/>
        <end position="137"/>
    </location>
</feature>
<feature type="compositionally biased region" description="Polar residues" evidence="3">
    <location>
        <begin position="314"/>
        <end position="323"/>
    </location>
</feature>
<feature type="compositionally biased region" description="Polar residues" evidence="3">
    <location>
        <begin position="339"/>
        <end position="348"/>
    </location>
</feature>
<feature type="modified residue" description="N6-acetyllysine" evidence="1">
    <location>
        <position position="75"/>
    </location>
</feature>
<feature type="modified residue" description="N6-acetyllysine" evidence="1">
    <location>
        <position position="78"/>
    </location>
</feature>
<feature type="cross-link" description="Glycyl lysine isopeptide (Lys-Gly) (interchain with G-Cter in SUMO)" evidence="1">
    <location>
        <position position="137"/>
    </location>
</feature>
<feature type="cross-link" description="Glycyl lysine isopeptide (Lys-Gly) (interchain with G-Cter in SUMO)" evidence="1">
    <location>
        <position position="164"/>
    </location>
</feature>
<feature type="cross-link" description="Glycyl lysine isopeptide (Lys-Gly) (interchain with G-Cter in SUMO)" evidence="1">
    <location>
        <position position="291"/>
    </location>
</feature>